<accession>A9A9U5</accession>
<reference key="1">
    <citation type="submission" date="2007-10" db="EMBL/GenBank/DDBJ databases">
        <title>Complete sequence of Methanococcus maripaludis C6.</title>
        <authorList>
            <consortium name="US DOE Joint Genome Institute"/>
            <person name="Copeland A."/>
            <person name="Lucas S."/>
            <person name="Lapidus A."/>
            <person name="Barry K."/>
            <person name="Glavina del Rio T."/>
            <person name="Dalin E."/>
            <person name="Tice H."/>
            <person name="Pitluck S."/>
            <person name="Clum A."/>
            <person name="Schmutz J."/>
            <person name="Larimer F."/>
            <person name="Land M."/>
            <person name="Hauser L."/>
            <person name="Kyrpides N."/>
            <person name="Mikhailova N."/>
            <person name="Sieprawska-Lupa M."/>
            <person name="Whitman W.B."/>
            <person name="Richardson P."/>
        </authorList>
    </citation>
    <scope>NUCLEOTIDE SEQUENCE [LARGE SCALE GENOMIC DNA]</scope>
    <source>
        <strain>C6 / ATCC BAA-1332</strain>
    </source>
</reference>
<protein>
    <recommendedName>
        <fullName evidence="1">Small ribosomal subunit protein uS7</fullName>
    </recommendedName>
    <alternativeName>
        <fullName evidence="2">30S ribosomal protein S7</fullName>
    </alternativeName>
</protein>
<feature type="chain" id="PRO_0000344312" description="Small ribosomal subunit protein uS7">
    <location>
        <begin position="1"/>
        <end position="188"/>
    </location>
</feature>
<proteinExistence type="inferred from homology"/>
<evidence type="ECO:0000255" key="1">
    <source>
        <dbReference type="HAMAP-Rule" id="MF_00480"/>
    </source>
</evidence>
<evidence type="ECO:0000305" key="2"/>
<comment type="function">
    <text evidence="1">One of the primary rRNA binding proteins, it binds directly to 16S rRNA where it nucleates assembly of the head domain of the 30S subunit. Is located at the subunit interface close to the decoding center.</text>
</comment>
<comment type="subunit">
    <text evidence="1">Part of the 30S ribosomal subunit.</text>
</comment>
<comment type="similarity">
    <text evidence="1">Belongs to the universal ribosomal protein uS7 family.</text>
</comment>
<gene>
    <name evidence="1" type="primary">rps7</name>
    <name type="ordered locus">MmarC6_1305</name>
</gene>
<organism>
    <name type="scientific">Methanococcus maripaludis (strain C6 / ATCC BAA-1332)</name>
    <dbReference type="NCBI Taxonomy" id="444158"/>
    <lineage>
        <taxon>Archaea</taxon>
        <taxon>Methanobacteriati</taxon>
        <taxon>Methanobacteriota</taxon>
        <taxon>Methanomada group</taxon>
        <taxon>Methanococci</taxon>
        <taxon>Methanococcales</taxon>
        <taxon>Methanococcaceae</taxon>
        <taxon>Methanococcus</taxon>
    </lineage>
</organism>
<sequence>MEIKLFGKWDSETVTVKDPSLKSYVSVTPVLVPHTAGRNSKKSFDKSKMNIVERLANKLMANQNNTGKKHETLAIVEEALTIIENRTKENPVQVLVDALENSGPREETTRISYGGIAFLQSVDVSPSRRLDTAFRNIALGASQSAHKNKKTVAQCLADEIIFASKADMQKSFAVRKKEEKERVAQSAR</sequence>
<dbReference type="EMBL" id="CP000867">
    <property type="protein sequence ID" value="ABX02118.1"/>
    <property type="molecule type" value="Genomic_DNA"/>
</dbReference>
<dbReference type="SMR" id="A9A9U5"/>
<dbReference type="STRING" id="444158.MmarC6_1305"/>
<dbReference type="KEGG" id="mmx:MmarC6_1305"/>
<dbReference type="eggNOG" id="arCOG04254">
    <property type="taxonomic scope" value="Archaea"/>
</dbReference>
<dbReference type="HOGENOM" id="CLU_063975_0_0_2"/>
<dbReference type="OrthoDB" id="45346at2157"/>
<dbReference type="PhylomeDB" id="A9A9U5"/>
<dbReference type="GO" id="GO:0015935">
    <property type="term" value="C:small ribosomal subunit"/>
    <property type="evidence" value="ECO:0007669"/>
    <property type="project" value="InterPro"/>
</dbReference>
<dbReference type="GO" id="GO:0019843">
    <property type="term" value="F:rRNA binding"/>
    <property type="evidence" value="ECO:0007669"/>
    <property type="project" value="UniProtKB-UniRule"/>
</dbReference>
<dbReference type="GO" id="GO:0003735">
    <property type="term" value="F:structural constituent of ribosome"/>
    <property type="evidence" value="ECO:0007669"/>
    <property type="project" value="InterPro"/>
</dbReference>
<dbReference type="GO" id="GO:0006412">
    <property type="term" value="P:translation"/>
    <property type="evidence" value="ECO:0007669"/>
    <property type="project" value="UniProtKB-UniRule"/>
</dbReference>
<dbReference type="CDD" id="cd14867">
    <property type="entry name" value="uS7_Eukaryote"/>
    <property type="match status" value="1"/>
</dbReference>
<dbReference type="Gene3D" id="1.10.455.10">
    <property type="entry name" value="Ribosomal protein S7 domain"/>
    <property type="match status" value="1"/>
</dbReference>
<dbReference type="HAMAP" id="MF_00480_A">
    <property type="entry name" value="Ribosomal_uS7_A"/>
    <property type="match status" value="1"/>
</dbReference>
<dbReference type="InterPro" id="IPR000235">
    <property type="entry name" value="Ribosomal_uS7"/>
</dbReference>
<dbReference type="InterPro" id="IPR026018">
    <property type="entry name" value="Ribosomal_uS7_arc"/>
</dbReference>
<dbReference type="InterPro" id="IPR020606">
    <property type="entry name" value="Ribosomal_uS7_CS"/>
</dbReference>
<dbReference type="InterPro" id="IPR023798">
    <property type="entry name" value="Ribosomal_uS7_dom"/>
</dbReference>
<dbReference type="InterPro" id="IPR036823">
    <property type="entry name" value="Ribosomal_uS7_dom_sf"/>
</dbReference>
<dbReference type="InterPro" id="IPR005716">
    <property type="entry name" value="Ribosomal_uS7_euk/arc"/>
</dbReference>
<dbReference type="NCBIfam" id="NF003106">
    <property type="entry name" value="PRK04027.1"/>
    <property type="match status" value="1"/>
</dbReference>
<dbReference type="NCBIfam" id="TIGR01028">
    <property type="entry name" value="uS7_euk_arch"/>
    <property type="match status" value="1"/>
</dbReference>
<dbReference type="PANTHER" id="PTHR11205">
    <property type="entry name" value="RIBOSOMAL PROTEIN S7"/>
    <property type="match status" value="1"/>
</dbReference>
<dbReference type="Pfam" id="PF00177">
    <property type="entry name" value="Ribosomal_S7"/>
    <property type="match status" value="1"/>
</dbReference>
<dbReference type="PIRSF" id="PIRSF002122">
    <property type="entry name" value="RPS7p_RPS7a_RPS5e_RPS7o"/>
    <property type="match status" value="1"/>
</dbReference>
<dbReference type="SUPFAM" id="SSF47973">
    <property type="entry name" value="Ribosomal protein S7"/>
    <property type="match status" value="1"/>
</dbReference>
<dbReference type="PROSITE" id="PS00052">
    <property type="entry name" value="RIBOSOMAL_S7"/>
    <property type="match status" value="1"/>
</dbReference>
<name>RS7_METM6</name>
<keyword id="KW-0687">Ribonucleoprotein</keyword>
<keyword id="KW-0689">Ribosomal protein</keyword>
<keyword id="KW-0694">RNA-binding</keyword>
<keyword id="KW-0699">rRNA-binding</keyword>